<dbReference type="EC" id="2.3.1.180" evidence="1"/>
<dbReference type="EMBL" id="CP000919">
    <property type="protein sequence ID" value="ACO18159.1"/>
    <property type="molecule type" value="Genomic_DNA"/>
</dbReference>
<dbReference type="RefSeq" id="WP_000852948.1">
    <property type="nucleotide sequence ID" value="NC_012466.1"/>
</dbReference>
<dbReference type="SMR" id="C1CCI2"/>
<dbReference type="KEGG" id="sjj:SPJ_0403"/>
<dbReference type="HOGENOM" id="CLU_039592_4_1_9"/>
<dbReference type="UniPathway" id="UPA00094"/>
<dbReference type="Proteomes" id="UP000002206">
    <property type="component" value="Chromosome"/>
</dbReference>
<dbReference type="GO" id="GO:0005737">
    <property type="term" value="C:cytoplasm"/>
    <property type="evidence" value="ECO:0007669"/>
    <property type="project" value="UniProtKB-SubCell"/>
</dbReference>
<dbReference type="GO" id="GO:0004315">
    <property type="term" value="F:3-oxoacyl-[acyl-carrier-protein] synthase activity"/>
    <property type="evidence" value="ECO:0007669"/>
    <property type="project" value="InterPro"/>
</dbReference>
<dbReference type="GO" id="GO:0033818">
    <property type="term" value="F:beta-ketoacyl-acyl-carrier-protein synthase III activity"/>
    <property type="evidence" value="ECO:0007669"/>
    <property type="project" value="UniProtKB-UniRule"/>
</dbReference>
<dbReference type="GO" id="GO:0006633">
    <property type="term" value="P:fatty acid biosynthetic process"/>
    <property type="evidence" value="ECO:0007669"/>
    <property type="project" value="UniProtKB-UniRule"/>
</dbReference>
<dbReference type="CDD" id="cd00830">
    <property type="entry name" value="KAS_III"/>
    <property type="match status" value="1"/>
</dbReference>
<dbReference type="Gene3D" id="3.40.47.10">
    <property type="match status" value="1"/>
</dbReference>
<dbReference type="HAMAP" id="MF_01815">
    <property type="entry name" value="FabH"/>
    <property type="match status" value="1"/>
</dbReference>
<dbReference type="InterPro" id="IPR013747">
    <property type="entry name" value="ACP_syn_III_C"/>
</dbReference>
<dbReference type="InterPro" id="IPR013751">
    <property type="entry name" value="ACP_syn_III_N"/>
</dbReference>
<dbReference type="InterPro" id="IPR004655">
    <property type="entry name" value="FabH"/>
</dbReference>
<dbReference type="InterPro" id="IPR016039">
    <property type="entry name" value="Thiolase-like"/>
</dbReference>
<dbReference type="NCBIfam" id="TIGR00747">
    <property type="entry name" value="fabH"/>
    <property type="match status" value="1"/>
</dbReference>
<dbReference type="NCBIfam" id="NF006829">
    <property type="entry name" value="PRK09352.1"/>
    <property type="match status" value="1"/>
</dbReference>
<dbReference type="PANTHER" id="PTHR43091">
    <property type="entry name" value="3-OXOACYL-[ACYL-CARRIER-PROTEIN] SYNTHASE"/>
    <property type="match status" value="1"/>
</dbReference>
<dbReference type="PANTHER" id="PTHR43091:SF1">
    <property type="entry name" value="BETA-KETOACYL-[ACYL-CARRIER-PROTEIN] SYNTHASE III, CHLOROPLASTIC"/>
    <property type="match status" value="1"/>
</dbReference>
<dbReference type="Pfam" id="PF08545">
    <property type="entry name" value="ACP_syn_III"/>
    <property type="match status" value="1"/>
</dbReference>
<dbReference type="Pfam" id="PF08541">
    <property type="entry name" value="ACP_syn_III_C"/>
    <property type="match status" value="1"/>
</dbReference>
<dbReference type="SUPFAM" id="SSF53901">
    <property type="entry name" value="Thiolase-like"/>
    <property type="match status" value="1"/>
</dbReference>
<organism>
    <name type="scientific">Streptococcus pneumoniae (strain JJA)</name>
    <dbReference type="NCBI Taxonomy" id="488222"/>
    <lineage>
        <taxon>Bacteria</taxon>
        <taxon>Bacillati</taxon>
        <taxon>Bacillota</taxon>
        <taxon>Bacilli</taxon>
        <taxon>Lactobacillales</taxon>
        <taxon>Streptococcaceae</taxon>
        <taxon>Streptococcus</taxon>
    </lineage>
</organism>
<sequence>MAFAKISQVAHYVPEQVVTNHDLAQIMDTNDEWISSRTGIRQRHISRTESTSDLATEVAKKLMAKAGITGEELDFIILATITPDSMMPSTAARVQANIGANKAFAFDLTAACSGFVFALSTAEKFIASGRFQKGLVIGSETLSKAVDWSDRSTAVLFGDGAGGVLLEASEQEHFLAESLNSDGSRSECLTYGHSGLHSPFSDQESADSFLKMDGRTVFDFAIRDVAKSIKQTIDESPIEVTDLDYLLLHQANDRILDKMARKIGVDRAKLPANMMEYGNTSAASIPILLSECVEQGLIPLDGSQTVLLSGFGGGLTWGTLILTI</sequence>
<keyword id="KW-0012">Acyltransferase</keyword>
<keyword id="KW-0963">Cytoplasm</keyword>
<keyword id="KW-0275">Fatty acid biosynthesis</keyword>
<keyword id="KW-0276">Fatty acid metabolism</keyword>
<keyword id="KW-0444">Lipid biosynthesis</keyword>
<keyword id="KW-0443">Lipid metabolism</keyword>
<keyword id="KW-0511">Multifunctional enzyme</keyword>
<keyword id="KW-0808">Transferase</keyword>
<proteinExistence type="inferred from homology"/>
<comment type="function">
    <text evidence="1">Catalyzes the condensation reaction of fatty acid synthesis by the addition to an acyl acceptor of two carbons from malonyl-ACP. Catalyzes the first condensation reaction which initiates fatty acid synthesis and may therefore play a role in governing the total rate of fatty acid production. Possesses both acetoacetyl-ACP synthase and acetyl transacylase activities. Its substrate specificity determines the biosynthesis of branched-chain and/or straight-chain of fatty acids.</text>
</comment>
<comment type="catalytic activity">
    <reaction evidence="1">
        <text>malonyl-[ACP] + acetyl-CoA + H(+) = 3-oxobutanoyl-[ACP] + CO2 + CoA</text>
        <dbReference type="Rhea" id="RHEA:12080"/>
        <dbReference type="Rhea" id="RHEA-COMP:9623"/>
        <dbReference type="Rhea" id="RHEA-COMP:9625"/>
        <dbReference type="ChEBI" id="CHEBI:15378"/>
        <dbReference type="ChEBI" id="CHEBI:16526"/>
        <dbReference type="ChEBI" id="CHEBI:57287"/>
        <dbReference type="ChEBI" id="CHEBI:57288"/>
        <dbReference type="ChEBI" id="CHEBI:78449"/>
        <dbReference type="ChEBI" id="CHEBI:78450"/>
        <dbReference type="EC" id="2.3.1.180"/>
    </reaction>
</comment>
<comment type="pathway">
    <text evidence="1">Lipid metabolism; fatty acid biosynthesis.</text>
</comment>
<comment type="subunit">
    <text evidence="1">Homodimer.</text>
</comment>
<comment type="subcellular location">
    <subcellularLocation>
        <location evidence="1">Cytoplasm</location>
    </subcellularLocation>
</comment>
<comment type="domain">
    <text evidence="1">The last Arg residue of the ACP-binding site is essential for the weak association between ACP/AcpP and FabH.</text>
</comment>
<comment type="similarity">
    <text evidence="1">Belongs to the thiolase-like superfamily. FabH family.</text>
</comment>
<evidence type="ECO:0000255" key="1">
    <source>
        <dbReference type="HAMAP-Rule" id="MF_01815"/>
    </source>
</evidence>
<feature type="chain" id="PRO_1000187904" description="Beta-ketoacyl-[acyl-carrier-protein] synthase III">
    <location>
        <begin position="1"/>
        <end position="324"/>
    </location>
</feature>
<feature type="region of interest" description="ACP-binding" evidence="1">
    <location>
        <begin position="250"/>
        <end position="254"/>
    </location>
</feature>
<feature type="active site" evidence="1">
    <location>
        <position position="112"/>
    </location>
</feature>
<feature type="active site" evidence="1">
    <location>
        <position position="249"/>
    </location>
</feature>
<feature type="active site" evidence="1">
    <location>
        <position position="279"/>
    </location>
</feature>
<reference key="1">
    <citation type="journal article" date="2010" name="Genome Biol.">
        <title>Structure and dynamics of the pan-genome of Streptococcus pneumoniae and closely related species.</title>
        <authorList>
            <person name="Donati C."/>
            <person name="Hiller N.L."/>
            <person name="Tettelin H."/>
            <person name="Muzzi A."/>
            <person name="Croucher N.J."/>
            <person name="Angiuoli S.V."/>
            <person name="Oggioni M."/>
            <person name="Dunning Hotopp J.C."/>
            <person name="Hu F.Z."/>
            <person name="Riley D.R."/>
            <person name="Covacci A."/>
            <person name="Mitchell T.J."/>
            <person name="Bentley S.D."/>
            <person name="Kilian M."/>
            <person name="Ehrlich G.D."/>
            <person name="Rappuoli R."/>
            <person name="Moxon E.R."/>
            <person name="Masignani V."/>
        </authorList>
    </citation>
    <scope>NUCLEOTIDE SEQUENCE [LARGE SCALE GENOMIC DNA]</scope>
    <source>
        <strain>JJA</strain>
    </source>
</reference>
<protein>
    <recommendedName>
        <fullName evidence="1">Beta-ketoacyl-[acyl-carrier-protein] synthase III</fullName>
        <shortName evidence="1">Beta-ketoacyl-ACP synthase III</shortName>
        <shortName evidence="1">KAS III</shortName>
        <ecNumber evidence="1">2.3.1.180</ecNumber>
    </recommendedName>
    <alternativeName>
        <fullName evidence="1">3-oxoacyl-[acyl-carrier-protein] synthase 3</fullName>
    </alternativeName>
    <alternativeName>
        <fullName evidence="1">3-oxoacyl-[acyl-carrier-protein] synthase III</fullName>
    </alternativeName>
</protein>
<gene>
    <name evidence="1" type="primary">fabH</name>
    <name type="ordered locus">SPJ_0403</name>
</gene>
<name>FABH_STRZJ</name>
<accession>C1CCI2</accession>